<reference key="1">
    <citation type="submission" date="2007-04" db="EMBL/GenBank/DDBJ databases">
        <title>Complete sequence of Shewanella putrefaciens CN-32.</title>
        <authorList>
            <consortium name="US DOE Joint Genome Institute"/>
            <person name="Copeland A."/>
            <person name="Lucas S."/>
            <person name="Lapidus A."/>
            <person name="Barry K."/>
            <person name="Detter J.C."/>
            <person name="Glavina del Rio T."/>
            <person name="Hammon N."/>
            <person name="Israni S."/>
            <person name="Dalin E."/>
            <person name="Tice H."/>
            <person name="Pitluck S."/>
            <person name="Chain P."/>
            <person name="Malfatti S."/>
            <person name="Shin M."/>
            <person name="Vergez L."/>
            <person name="Schmutz J."/>
            <person name="Larimer F."/>
            <person name="Land M."/>
            <person name="Hauser L."/>
            <person name="Kyrpides N."/>
            <person name="Mikhailova N."/>
            <person name="Romine M.F."/>
            <person name="Fredrickson J."/>
            <person name="Tiedje J."/>
            <person name="Richardson P."/>
        </authorList>
    </citation>
    <scope>NUCLEOTIDE SEQUENCE [LARGE SCALE GENOMIC DNA]</scope>
    <source>
        <strain>CN-32 / ATCC BAA-453</strain>
    </source>
</reference>
<name>TUSA_SHEPC</name>
<feature type="chain" id="PRO_1000050027" description="Sulfur carrier protein TusA">
    <location>
        <begin position="1"/>
        <end position="81"/>
    </location>
</feature>
<feature type="active site" description="Cysteine persulfide intermediate" evidence="1">
    <location>
        <position position="19"/>
    </location>
</feature>
<gene>
    <name evidence="1" type="primary">tusA</name>
    <name type="ordered locus">Sputcn32_0011</name>
</gene>
<evidence type="ECO:0000255" key="1">
    <source>
        <dbReference type="HAMAP-Rule" id="MF_00413"/>
    </source>
</evidence>
<proteinExistence type="inferred from homology"/>
<keyword id="KW-0963">Cytoplasm</keyword>
<dbReference type="EMBL" id="CP000681">
    <property type="protein sequence ID" value="ABP73747.1"/>
    <property type="molecule type" value="Genomic_DNA"/>
</dbReference>
<dbReference type="SMR" id="A4Y1B4"/>
<dbReference type="STRING" id="319224.Sputcn32_0011"/>
<dbReference type="KEGG" id="spc:Sputcn32_0011"/>
<dbReference type="eggNOG" id="COG0425">
    <property type="taxonomic scope" value="Bacteria"/>
</dbReference>
<dbReference type="HOGENOM" id="CLU_165255_5_0_6"/>
<dbReference type="GO" id="GO:0005737">
    <property type="term" value="C:cytoplasm"/>
    <property type="evidence" value="ECO:0007669"/>
    <property type="project" value="UniProtKB-SubCell"/>
</dbReference>
<dbReference type="GO" id="GO:0097163">
    <property type="term" value="F:sulfur carrier activity"/>
    <property type="evidence" value="ECO:0007669"/>
    <property type="project" value="UniProtKB-UniRule"/>
</dbReference>
<dbReference type="GO" id="GO:0002143">
    <property type="term" value="P:tRNA wobble position uridine thiolation"/>
    <property type="evidence" value="ECO:0007669"/>
    <property type="project" value="InterPro"/>
</dbReference>
<dbReference type="CDD" id="cd03423">
    <property type="entry name" value="SirA"/>
    <property type="match status" value="1"/>
</dbReference>
<dbReference type="Gene3D" id="3.30.110.40">
    <property type="entry name" value="TusA-like domain"/>
    <property type="match status" value="1"/>
</dbReference>
<dbReference type="HAMAP" id="MF_00413">
    <property type="entry name" value="Thiourid_synth_A"/>
    <property type="match status" value="1"/>
</dbReference>
<dbReference type="InterPro" id="IPR022931">
    <property type="entry name" value="Sulphur_carrier_TusA"/>
</dbReference>
<dbReference type="InterPro" id="IPR001455">
    <property type="entry name" value="TusA-like"/>
</dbReference>
<dbReference type="InterPro" id="IPR036868">
    <property type="entry name" value="TusA-like_sf"/>
</dbReference>
<dbReference type="NCBIfam" id="NF001423">
    <property type="entry name" value="PRK00299.1"/>
    <property type="match status" value="1"/>
</dbReference>
<dbReference type="PANTHER" id="PTHR33279:SF2">
    <property type="entry name" value="SULFUR CARRIER PROTEIN TUSA"/>
    <property type="match status" value="1"/>
</dbReference>
<dbReference type="PANTHER" id="PTHR33279">
    <property type="entry name" value="SULFUR CARRIER PROTEIN YEDF-RELATED"/>
    <property type="match status" value="1"/>
</dbReference>
<dbReference type="Pfam" id="PF01206">
    <property type="entry name" value="TusA"/>
    <property type="match status" value="1"/>
</dbReference>
<dbReference type="SUPFAM" id="SSF64307">
    <property type="entry name" value="SirA-like"/>
    <property type="match status" value="1"/>
</dbReference>
<dbReference type="PROSITE" id="PS01148">
    <property type="entry name" value="UPF0033"/>
    <property type="match status" value="1"/>
</dbReference>
<comment type="function">
    <text evidence="1">Sulfur carrier protein which probably makes part of a sulfur-relay system.</text>
</comment>
<comment type="subcellular location">
    <subcellularLocation>
        <location evidence="1">Cytoplasm</location>
    </subcellularLocation>
</comment>
<comment type="similarity">
    <text evidence="1">Belongs to the sulfur carrier protein TusA family.</text>
</comment>
<accession>A4Y1B4</accession>
<sequence>MNDAFSNAQHKLDALGLRCPEPVMMVRKTVRQMAAGETLLIIADDPATTRDIPSFCEFMDHTLIASETAQTPYQYLIKKGL</sequence>
<organism>
    <name type="scientific">Shewanella putrefaciens (strain CN-32 / ATCC BAA-453)</name>
    <dbReference type="NCBI Taxonomy" id="319224"/>
    <lineage>
        <taxon>Bacteria</taxon>
        <taxon>Pseudomonadati</taxon>
        <taxon>Pseudomonadota</taxon>
        <taxon>Gammaproteobacteria</taxon>
        <taxon>Alteromonadales</taxon>
        <taxon>Shewanellaceae</taxon>
        <taxon>Shewanella</taxon>
    </lineage>
</organism>
<protein>
    <recommendedName>
        <fullName evidence="1">Sulfur carrier protein TusA</fullName>
    </recommendedName>
</protein>